<keyword id="KW-0133">Cell shape</keyword>
<keyword id="KW-0961">Cell wall biogenesis/degradation</keyword>
<keyword id="KW-0413">Isomerase</keyword>
<keyword id="KW-0573">Peptidoglycan synthesis</keyword>
<keyword id="KW-1185">Reference proteome</keyword>
<gene>
    <name evidence="1" type="primary">murI</name>
    <name type="ordered locus">Bcav_2737</name>
</gene>
<evidence type="ECO:0000255" key="1">
    <source>
        <dbReference type="HAMAP-Rule" id="MF_00258"/>
    </source>
</evidence>
<accession>C5BY82</accession>
<sequence length="292" mass="30751">MSDAPIGIFDSGVGGLTVARAVLDQLPHESVLYVGDTARTPYGPRPIAQVREYSLEILDSLVASGVKALVIACNSASAAMLADARERYEGDGVPVVEVIRPAVRRAAAATRNGRIGVIGTRATISSRAYEDAFAAAPQLQLHTRACPDFVELVEDGETSGPAVLASAHAYLDPLRDAGVDTLVLGCTHYPLLAGAISYVMGEGVTLVSSAEETALDVYRTLVAHDLLRSADGARGDDGARSAPRHRFLATGDPAAFTRLARRFLGPEVDDVHDAVEVTGEIPRITAPLRGTR</sequence>
<comment type="function">
    <text evidence="1">Provides the (R)-glutamate required for cell wall biosynthesis.</text>
</comment>
<comment type="catalytic activity">
    <reaction evidence="1">
        <text>L-glutamate = D-glutamate</text>
        <dbReference type="Rhea" id="RHEA:12813"/>
        <dbReference type="ChEBI" id="CHEBI:29985"/>
        <dbReference type="ChEBI" id="CHEBI:29986"/>
        <dbReference type="EC" id="5.1.1.3"/>
    </reaction>
</comment>
<comment type="pathway">
    <text evidence="1">Cell wall biogenesis; peptidoglycan biosynthesis.</text>
</comment>
<comment type="similarity">
    <text evidence="1">Belongs to the aspartate/glutamate racemases family.</text>
</comment>
<reference key="1">
    <citation type="journal article" date="2009" name="Stand. Genomic Sci.">
        <title>Complete genome sequence of Beutenbergia cavernae type strain (HKI 0122).</title>
        <authorList>
            <person name="Land M."/>
            <person name="Pukall R."/>
            <person name="Abt B."/>
            <person name="Goker M."/>
            <person name="Rohde M."/>
            <person name="Glavina Del Rio T."/>
            <person name="Tice H."/>
            <person name="Copeland A."/>
            <person name="Cheng J.F."/>
            <person name="Lucas S."/>
            <person name="Chen F."/>
            <person name="Nolan M."/>
            <person name="Bruce D."/>
            <person name="Goodwin L."/>
            <person name="Pitluck S."/>
            <person name="Ivanova N."/>
            <person name="Mavromatis K."/>
            <person name="Ovchinnikova G."/>
            <person name="Pati A."/>
            <person name="Chen A."/>
            <person name="Palaniappan K."/>
            <person name="Hauser L."/>
            <person name="Chang Y.J."/>
            <person name="Jefferies C.C."/>
            <person name="Saunders E."/>
            <person name="Brettin T."/>
            <person name="Detter J.C."/>
            <person name="Han C."/>
            <person name="Chain P."/>
            <person name="Bristow J."/>
            <person name="Eisen J.A."/>
            <person name="Markowitz V."/>
            <person name="Hugenholtz P."/>
            <person name="Kyrpides N.C."/>
            <person name="Klenk H.P."/>
            <person name="Lapidus A."/>
        </authorList>
    </citation>
    <scope>NUCLEOTIDE SEQUENCE [LARGE SCALE GENOMIC DNA]</scope>
    <source>
        <strain>ATCC BAA-8 / DSM 12333 / CCUG 43141 / JCM 11478 / NBRC 16432 / NCIMB 13614 / HKI 0122</strain>
    </source>
</reference>
<organism>
    <name type="scientific">Beutenbergia cavernae (strain ATCC BAA-8 / DSM 12333 / CCUG 43141 / JCM 11478 / NBRC 16432 / NCIMB 13614 / HKI 0122)</name>
    <dbReference type="NCBI Taxonomy" id="471853"/>
    <lineage>
        <taxon>Bacteria</taxon>
        <taxon>Bacillati</taxon>
        <taxon>Actinomycetota</taxon>
        <taxon>Actinomycetes</taxon>
        <taxon>Micrococcales</taxon>
        <taxon>Beutenbergiaceae</taxon>
        <taxon>Beutenbergia</taxon>
    </lineage>
</organism>
<name>MURI_BEUC1</name>
<dbReference type="EC" id="5.1.1.3" evidence="1"/>
<dbReference type="EMBL" id="CP001618">
    <property type="protein sequence ID" value="ACQ80982.1"/>
    <property type="molecule type" value="Genomic_DNA"/>
</dbReference>
<dbReference type="RefSeq" id="WP_015883222.1">
    <property type="nucleotide sequence ID" value="NC_012669.1"/>
</dbReference>
<dbReference type="SMR" id="C5BY82"/>
<dbReference type="STRING" id="471853.Bcav_2737"/>
<dbReference type="KEGG" id="bcv:Bcav_2737"/>
<dbReference type="eggNOG" id="COG0796">
    <property type="taxonomic scope" value="Bacteria"/>
</dbReference>
<dbReference type="HOGENOM" id="CLU_052344_0_1_11"/>
<dbReference type="OrthoDB" id="9801055at2"/>
<dbReference type="UniPathway" id="UPA00219"/>
<dbReference type="Proteomes" id="UP000007962">
    <property type="component" value="Chromosome"/>
</dbReference>
<dbReference type="GO" id="GO:0008881">
    <property type="term" value="F:glutamate racemase activity"/>
    <property type="evidence" value="ECO:0007669"/>
    <property type="project" value="UniProtKB-UniRule"/>
</dbReference>
<dbReference type="GO" id="GO:0071555">
    <property type="term" value="P:cell wall organization"/>
    <property type="evidence" value="ECO:0007669"/>
    <property type="project" value="UniProtKB-KW"/>
</dbReference>
<dbReference type="GO" id="GO:0009252">
    <property type="term" value="P:peptidoglycan biosynthetic process"/>
    <property type="evidence" value="ECO:0007669"/>
    <property type="project" value="UniProtKB-UniRule"/>
</dbReference>
<dbReference type="GO" id="GO:0008360">
    <property type="term" value="P:regulation of cell shape"/>
    <property type="evidence" value="ECO:0007669"/>
    <property type="project" value="UniProtKB-KW"/>
</dbReference>
<dbReference type="FunFam" id="3.40.50.1860:FF:000001">
    <property type="entry name" value="Glutamate racemase"/>
    <property type="match status" value="1"/>
</dbReference>
<dbReference type="Gene3D" id="3.40.50.1860">
    <property type="match status" value="2"/>
</dbReference>
<dbReference type="HAMAP" id="MF_00258">
    <property type="entry name" value="Glu_racemase"/>
    <property type="match status" value="1"/>
</dbReference>
<dbReference type="InterPro" id="IPR015942">
    <property type="entry name" value="Asp/Glu/hydantoin_racemase"/>
</dbReference>
<dbReference type="InterPro" id="IPR001920">
    <property type="entry name" value="Asp/Glu_race"/>
</dbReference>
<dbReference type="InterPro" id="IPR018187">
    <property type="entry name" value="Asp/Glu_racemase_AS_1"/>
</dbReference>
<dbReference type="InterPro" id="IPR033134">
    <property type="entry name" value="Asp/Glu_racemase_AS_2"/>
</dbReference>
<dbReference type="InterPro" id="IPR004391">
    <property type="entry name" value="Glu_race"/>
</dbReference>
<dbReference type="NCBIfam" id="TIGR00067">
    <property type="entry name" value="glut_race"/>
    <property type="match status" value="1"/>
</dbReference>
<dbReference type="PANTHER" id="PTHR21198">
    <property type="entry name" value="GLUTAMATE RACEMASE"/>
    <property type="match status" value="1"/>
</dbReference>
<dbReference type="PANTHER" id="PTHR21198:SF2">
    <property type="entry name" value="GLUTAMATE RACEMASE"/>
    <property type="match status" value="1"/>
</dbReference>
<dbReference type="Pfam" id="PF01177">
    <property type="entry name" value="Asp_Glu_race"/>
    <property type="match status" value="1"/>
</dbReference>
<dbReference type="SUPFAM" id="SSF53681">
    <property type="entry name" value="Aspartate/glutamate racemase"/>
    <property type="match status" value="2"/>
</dbReference>
<dbReference type="PROSITE" id="PS00923">
    <property type="entry name" value="ASP_GLU_RACEMASE_1"/>
    <property type="match status" value="1"/>
</dbReference>
<dbReference type="PROSITE" id="PS00924">
    <property type="entry name" value="ASP_GLU_RACEMASE_2"/>
    <property type="match status" value="1"/>
</dbReference>
<feature type="chain" id="PRO_1000204623" description="Glutamate racemase">
    <location>
        <begin position="1"/>
        <end position="292"/>
    </location>
</feature>
<feature type="active site" description="Proton donor/acceptor" evidence="1">
    <location>
        <position position="73"/>
    </location>
</feature>
<feature type="active site" description="Proton donor/acceptor" evidence="1">
    <location>
        <position position="186"/>
    </location>
</feature>
<feature type="binding site" evidence="1">
    <location>
        <begin position="10"/>
        <end position="11"/>
    </location>
    <ligand>
        <name>substrate</name>
    </ligand>
</feature>
<feature type="binding site" evidence="1">
    <location>
        <begin position="42"/>
        <end position="43"/>
    </location>
    <ligand>
        <name>substrate</name>
    </ligand>
</feature>
<feature type="binding site" evidence="1">
    <location>
        <begin position="74"/>
        <end position="75"/>
    </location>
    <ligand>
        <name>substrate</name>
    </ligand>
</feature>
<feature type="binding site" evidence="1">
    <location>
        <begin position="187"/>
        <end position="188"/>
    </location>
    <ligand>
        <name>substrate</name>
    </ligand>
</feature>
<protein>
    <recommendedName>
        <fullName evidence="1">Glutamate racemase</fullName>
        <ecNumber evidence="1">5.1.1.3</ecNumber>
    </recommendedName>
</protein>
<proteinExistence type="inferred from homology"/>